<sequence length="878" mass="97731">MPEIDARLREDVHQLGELLGDTIREQYGPAFLDKIERIRKGAKAARRGSAEGAQQLTATLDGLEESELLPVARAFNQFLNLANIAEQYHRIRRRRPNEPEPFENLALEELLGRLKDAGHAPGQLARQLAGLEIELVLTAHPTEVARRTLIQKYDAITAQLATKDHADLLPEERSRIQRRLQRLVAEVWHTDEIRKVRPTPVDEAKWGFAVIEHSLWEALPNVLRHVDEVLLRSTGERLPLSAAPLRFASWMGGDRDGNPNVTAGVTREVLLLARWMAADLYLRDIDRLAAELSMQEASPALLARVGDSAEPYRALLKQLRERLRLTRSWTHQALAGEVPAAEGVLEHNRDLVEPLQLCHESLHACGMGVIADGALLDCLRRAATFGLFLVRLDVRQDAGRHAAALSEITEYLELGSYAEWDEKTRLEFLLEELNSRRPLLPAHYQPSAETAEVLATCRAIAAAPPASLGSYVISMAGQPSDVLAVQLLLKESGVDWPMRVVPLFETLDDLDNAGPCMERLLTLPGYRSRLSGVQEVMIGYSDSAKDAGTLTAAWAQYRAQEKLVEICRHHEVELLLFHGRGGTVGRGGGPAHAAILSQPPGSVAGRFRVTEQGEMIRFKFGLPDIAEQNLNLYLAAVLEATLMPPPAPEPAWRAQMDRLAKDALHAYRRVVRDDPQFVEYFRLATPEQELGRLPLGSRPAKRREGGVESLRAIPWIFAWTQTRLMLPAWLGWETALLNAIERGEGALLGQMRERWPFFTTRIDMLEMVLAKADADIARLYDERLVPLELRPLGRRLRDLLSQAVRVVLGLTGQSLLLAHASETRESISVRNSYLDPLHLLQAELLARSRRCRGDACGGLEQALLVTVAGIAAGLRNTG</sequence>
<reference key="1">
    <citation type="submission" date="2007-06" db="EMBL/GenBank/DDBJ databases">
        <authorList>
            <person name="Dodson R.J."/>
            <person name="Harkins D."/>
            <person name="Paulsen I.T."/>
        </authorList>
    </citation>
    <scope>NUCLEOTIDE SEQUENCE [LARGE SCALE GENOMIC DNA]</scope>
    <source>
        <strain>DSM 24068 / PA7</strain>
    </source>
</reference>
<keyword id="KW-0120">Carbon dioxide fixation</keyword>
<keyword id="KW-0456">Lyase</keyword>
<keyword id="KW-0460">Magnesium</keyword>
<dbReference type="EC" id="4.1.1.31" evidence="1"/>
<dbReference type="EMBL" id="CP000744">
    <property type="protein sequence ID" value="ABR84834.1"/>
    <property type="molecule type" value="Genomic_DNA"/>
</dbReference>
<dbReference type="RefSeq" id="WP_012074668.1">
    <property type="nucleotide sequence ID" value="NC_009656.1"/>
</dbReference>
<dbReference type="SMR" id="A6V1A0"/>
<dbReference type="KEGG" id="pap:PSPA7_1451"/>
<dbReference type="HOGENOM" id="CLU_006557_2_0_6"/>
<dbReference type="Proteomes" id="UP000001582">
    <property type="component" value="Chromosome"/>
</dbReference>
<dbReference type="GO" id="GO:0005829">
    <property type="term" value="C:cytosol"/>
    <property type="evidence" value="ECO:0007669"/>
    <property type="project" value="TreeGrafter"/>
</dbReference>
<dbReference type="GO" id="GO:0000287">
    <property type="term" value="F:magnesium ion binding"/>
    <property type="evidence" value="ECO:0007669"/>
    <property type="project" value="UniProtKB-UniRule"/>
</dbReference>
<dbReference type="GO" id="GO:0008964">
    <property type="term" value="F:phosphoenolpyruvate carboxylase activity"/>
    <property type="evidence" value="ECO:0007669"/>
    <property type="project" value="UniProtKB-UniRule"/>
</dbReference>
<dbReference type="GO" id="GO:0015977">
    <property type="term" value="P:carbon fixation"/>
    <property type="evidence" value="ECO:0007669"/>
    <property type="project" value="UniProtKB-UniRule"/>
</dbReference>
<dbReference type="GO" id="GO:0006107">
    <property type="term" value="P:oxaloacetate metabolic process"/>
    <property type="evidence" value="ECO:0007669"/>
    <property type="project" value="UniProtKB-UniRule"/>
</dbReference>
<dbReference type="GO" id="GO:0006099">
    <property type="term" value="P:tricarboxylic acid cycle"/>
    <property type="evidence" value="ECO:0007669"/>
    <property type="project" value="InterPro"/>
</dbReference>
<dbReference type="Gene3D" id="1.20.1440.90">
    <property type="entry name" value="Phosphoenolpyruvate/pyruvate domain"/>
    <property type="match status" value="1"/>
</dbReference>
<dbReference type="HAMAP" id="MF_00595">
    <property type="entry name" value="PEPcase_type1"/>
    <property type="match status" value="1"/>
</dbReference>
<dbReference type="InterPro" id="IPR021135">
    <property type="entry name" value="PEP_COase"/>
</dbReference>
<dbReference type="InterPro" id="IPR022805">
    <property type="entry name" value="PEP_COase_bac/pln-type"/>
</dbReference>
<dbReference type="InterPro" id="IPR018129">
    <property type="entry name" value="PEP_COase_Lys_AS"/>
</dbReference>
<dbReference type="InterPro" id="IPR033129">
    <property type="entry name" value="PEPCASE_His_AS"/>
</dbReference>
<dbReference type="InterPro" id="IPR015813">
    <property type="entry name" value="Pyrv/PenolPyrv_kinase-like_dom"/>
</dbReference>
<dbReference type="NCBIfam" id="NF000584">
    <property type="entry name" value="PRK00009.1"/>
    <property type="match status" value="1"/>
</dbReference>
<dbReference type="PANTHER" id="PTHR30523">
    <property type="entry name" value="PHOSPHOENOLPYRUVATE CARBOXYLASE"/>
    <property type="match status" value="1"/>
</dbReference>
<dbReference type="PANTHER" id="PTHR30523:SF6">
    <property type="entry name" value="PHOSPHOENOLPYRUVATE CARBOXYLASE"/>
    <property type="match status" value="1"/>
</dbReference>
<dbReference type="Pfam" id="PF00311">
    <property type="entry name" value="PEPcase"/>
    <property type="match status" value="1"/>
</dbReference>
<dbReference type="PRINTS" id="PR00150">
    <property type="entry name" value="PEPCARBXLASE"/>
</dbReference>
<dbReference type="SUPFAM" id="SSF51621">
    <property type="entry name" value="Phosphoenolpyruvate/pyruvate domain"/>
    <property type="match status" value="1"/>
</dbReference>
<dbReference type="PROSITE" id="PS00781">
    <property type="entry name" value="PEPCASE_1"/>
    <property type="match status" value="1"/>
</dbReference>
<dbReference type="PROSITE" id="PS00393">
    <property type="entry name" value="PEPCASE_2"/>
    <property type="match status" value="1"/>
</dbReference>
<protein>
    <recommendedName>
        <fullName evidence="1">Phosphoenolpyruvate carboxylase</fullName>
        <shortName evidence="1">PEPC</shortName>
        <shortName evidence="1">PEPCase</shortName>
        <ecNumber evidence="1">4.1.1.31</ecNumber>
    </recommendedName>
</protein>
<organism>
    <name type="scientific">Pseudomonas paraeruginosa (strain DSM 24068 / PA7)</name>
    <name type="common">Pseudomonas aeruginosa (strain PA7)</name>
    <dbReference type="NCBI Taxonomy" id="381754"/>
    <lineage>
        <taxon>Bacteria</taxon>
        <taxon>Pseudomonadati</taxon>
        <taxon>Pseudomonadota</taxon>
        <taxon>Gammaproteobacteria</taxon>
        <taxon>Pseudomonadales</taxon>
        <taxon>Pseudomonadaceae</taxon>
        <taxon>Pseudomonas</taxon>
        <taxon>Pseudomonas paraeruginosa</taxon>
    </lineage>
</organism>
<name>CAPP_PSEP7</name>
<comment type="function">
    <text evidence="1">Forms oxaloacetate, a four-carbon dicarboxylic acid source for the tricarboxylic acid cycle.</text>
</comment>
<comment type="catalytic activity">
    <reaction evidence="1">
        <text>oxaloacetate + phosphate = phosphoenolpyruvate + hydrogencarbonate</text>
        <dbReference type="Rhea" id="RHEA:28370"/>
        <dbReference type="ChEBI" id="CHEBI:16452"/>
        <dbReference type="ChEBI" id="CHEBI:17544"/>
        <dbReference type="ChEBI" id="CHEBI:43474"/>
        <dbReference type="ChEBI" id="CHEBI:58702"/>
        <dbReference type="EC" id="4.1.1.31"/>
    </reaction>
</comment>
<comment type="cofactor">
    <cofactor evidence="1">
        <name>Mg(2+)</name>
        <dbReference type="ChEBI" id="CHEBI:18420"/>
    </cofactor>
</comment>
<comment type="similarity">
    <text evidence="1">Belongs to the PEPCase type 1 family.</text>
</comment>
<evidence type="ECO:0000255" key="1">
    <source>
        <dbReference type="HAMAP-Rule" id="MF_00595"/>
    </source>
</evidence>
<proteinExistence type="inferred from homology"/>
<accession>A6V1A0</accession>
<feature type="chain" id="PRO_1000025575" description="Phosphoenolpyruvate carboxylase">
    <location>
        <begin position="1"/>
        <end position="878"/>
    </location>
</feature>
<feature type="active site" evidence="1">
    <location>
        <position position="140"/>
    </location>
</feature>
<feature type="active site" evidence="1">
    <location>
        <position position="545"/>
    </location>
</feature>
<gene>
    <name evidence="1" type="primary">ppc</name>
    <name type="ordered locus">PSPA7_1451</name>
</gene>